<name>TRMFO_STRPG</name>
<gene>
    <name evidence="1" type="primary">trmFO</name>
    <name type="synonym">gid</name>
    <name type="ordered locus">SpyM50904</name>
</gene>
<comment type="function">
    <text evidence="1">Catalyzes the folate-dependent formation of 5-methyl-uridine at position 54 (M-5-U54) in all tRNAs.</text>
</comment>
<comment type="catalytic activity">
    <reaction evidence="1">
        <text>uridine(54) in tRNA + (6R)-5,10-methylene-5,6,7,8-tetrahydrofolate + NADH + H(+) = 5-methyluridine(54) in tRNA + (6S)-5,6,7,8-tetrahydrofolate + NAD(+)</text>
        <dbReference type="Rhea" id="RHEA:16873"/>
        <dbReference type="Rhea" id="RHEA-COMP:10167"/>
        <dbReference type="Rhea" id="RHEA-COMP:10193"/>
        <dbReference type="ChEBI" id="CHEBI:15378"/>
        <dbReference type="ChEBI" id="CHEBI:15636"/>
        <dbReference type="ChEBI" id="CHEBI:57453"/>
        <dbReference type="ChEBI" id="CHEBI:57540"/>
        <dbReference type="ChEBI" id="CHEBI:57945"/>
        <dbReference type="ChEBI" id="CHEBI:65315"/>
        <dbReference type="ChEBI" id="CHEBI:74447"/>
        <dbReference type="EC" id="2.1.1.74"/>
    </reaction>
</comment>
<comment type="catalytic activity">
    <reaction evidence="1">
        <text>uridine(54) in tRNA + (6R)-5,10-methylene-5,6,7,8-tetrahydrofolate + NADPH + H(+) = 5-methyluridine(54) in tRNA + (6S)-5,6,7,8-tetrahydrofolate + NADP(+)</text>
        <dbReference type="Rhea" id="RHEA:62372"/>
        <dbReference type="Rhea" id="RHEA-COMP:10167"/>
        <dbReference type="Rhea" id="RHEA-COMP:10193"/>
        <dbReference type="ChEBI" id="CHEBI:15378"/>
        <dbReference type="ChEBI" id="CHEBI:15636"/>
        <dbReference type="ChEBI" id="CHEBI:57453"/>
        <dbReference type="ChEBI" id="CHEBI:57783"/>
        <dbReference type="ChEBI" id="CHEBI:58349"/>
        <dbReference type="ChEBI" id="CHEBI:65315"/>
        <dbReference type="ChEBI" id="CHEBI:74447"/>
        <dbReference type="EC" id="2.1.1.74"/>
    </reaction>
</comment>
<comment type="cofactor">
    <cofactor evidence="1">
        <name>FAD</name>
        <dbReference type="ChEBI" id="CHEBI:57692"/>
    </cofactor>
</comment>
<comment type="subcellular location">
    <subcellularLocation>
        <location evidence="1">Cytoplasm</location>
    </subcellularLocation>
</comment>
<comment type="similarity">
    <text evidence="1">Belongs to the MnmG family. TrmFO subfamily.</text>
</comment>
<evidence type="ECO:0000255" key="1">
    <source>
        <dbReference type="HAMAP-Rule" id="MF_01037"/>
    </source>
</evidence>
<accession>A2REF7</accession>
<dbReference type="EC" id="2.1.1.74" evidence="1"/>
<dbReference type="EMBL" id="AM295007">
    <property type="protein sequence ID" value="CAM30232.1"/>
    <property type="molecule type" value="Genomic_DNA"/>
</dbReference>
<dbReference type="RefSeq" id="WP_011888869.1">
    <property type="nucleotide sequence ID" value="NC_009332.1"/>
</dbReference>
<dbReference type="SMR" id="A2REF7"/>
<dbReference type="KEGG" id="spf:SpyM50904"/>
<dbReference type="HOGENOM" id="CLU_033057_1_0_9"/>
<dbReference type="GO" id="GO:0005829">
    <property type="term" value="C:cytosol"/>
    <property type="evidence" value="ECO:0007669"/>
    <property type="project" value="TreeGrafter"/>
</dbReference>
<dbReference type="GO" id="GO:0050660">
    <property type="term" value="F:flavin adenine dinucleotide binding"/>
    <property type="evidence" value="ECO:0007669"/>
    <property type="project" value="UniProtKB-UniRule"/>
</dbReference>
<dbReference type="GO" id="GO:0047151">
    <property type="term" value="F:tRNA (uracil(54)-C5)-methyltransferase activity, 5,10-methylenetetrahydrofolate-dependent"/>
    <property type="evidence" value="ECO:0007669"/>
    <property type="project" value="UniProtKB-UniRule"/>
</dbReference>
<dbReference type="GO" id="GO:0030488">
    <property type="term" value="P:tRNA methylation"/>
    <property type="evidence" value="ECO:0007669"/>
    <property type="project" value="TreeGrafter"/>
</dbReference>
<dbReference type="GO" id="GO:0002098">
    <property type="term" value="P:tRNA wobble uridine modification"/>
    <property type="evidence" value="ECO:0007669"/>
    <property type="project" value="TreeGrafter"/>
</dbReference>
<dbReference type="FunFam" id="3.50.50.60:FF:000035">
    <property type="entry name" value="Methylenetetrahydrofolate--tRNA-(uracil-5-)-methyltransferase TrmFO"/>
    <property type="match status" value="1"/>
</dbReference>
<dbReference type="FunFam" id="3.50.50.60:FF:000040">
    <property type="entry name" value="Methylenetetrahydrofolate--tRNA-(uracil-5-)-methyltransferase TrmFO"/>
    <property type="match status" value="1"/>
</dbReference>
<dbReference type="Gene3D" id="3.50.50.60">
    <property type="entry name" value="FAD/NAD(P)-binding domain"/>
    <property type="match status" value="2"/>
</dbReference>
<dbReference type="HAMAP" id="MF_01037">
    <property type="entry name" value="TrmFO"/>
    <property type="match status" value="1"/>
</dbReference>
<dbReference type="InterPro" id="IPR036188">
    <property type="entry name" value="FAD/NAD-bd_sf"/>
</dbReference>
<dbReference type="InterPro" id="IPR002218">
    <property type="entry name" value="MnmG-rel"/>
</dbReference>
<dbReference type="InterPro" id="IPR020595">
    <property type="entry name" value="MnmG-rel_CS"/>
</dbReference>
<dbReference type="InterPro" id="IPR040131">
    <property type="entry name" value="MnmG_N"/>
</dbReference>
<dbReference type="InterPro" id="IPR004417">
    <property type="entry name" value="TrmFO"/>
</dbReference>
<dbReference type="NCBIfam" id="TIGR00137">
    <property type="entry name" value="gid_trmFO"/>
    <property type="match status" value="1"/>
</dbReference>
<dbReference type="NCBIfam" id="NF003739">
    <property type="entry name" value="PRK05335.1"/>
    <property type="match status" value="1"/>
</dbReference>
<dbReference type="PANTHER" id="PTHR11806">
    <property type="entry name" value="GLUCOSE INHIBITED DIVISION PROTEIN A"/>
    <property type="match status" value="1"/>
</dbReference>
<dbReference type="PANTHER" id="PTHR11806:SF2">
    <property type="entry name" value="METHYLENETETRAHYDROFOLATE--TRNA-(URACIL-5-)-METHYLTRANSFERASE TRMFO"/>
    <property type="match status" value="1"/>
</dbReference>
<dbReference type="Pfam" id="PF01134">
    <property type="entry name" value="GIDA"/>
    <property type="match status" value="1"/>
</dbReference>
<dbReference type="SUPFAM" id="SSF51905">
    <property type="entry name" value="FAD/NAD(P)-binding domain"/>
    <property type="match status" value="1"/>
</dbReference>
<dbReference type="PROSITE" id="PS01281">
    <property type="entry name" value="GIDA_2"/>
    <property type="match status" value="1"/>
</dbReference>
<sequence length="448" mass="49508">MSQSTATYINVIGAGLAGSEAAYQIAKRGIPVKLYEMRGVKATPQHKTTNFAELVCSNSFRGDSLTNAVGLLKEEMRRLDSIIMRNGEANRVPAGGAMAVDREGYAKSVTAELENHPLIEVIRDEITEIPNDAITVIATGPLTSDALAEKIHAVNGGDGFYFYDAAAPIIDKSTIDMSKVYLKSRYDKGEAAYLNCPMTKEEFMAFHEALTTAEEAPLNSFEKEKYFEGCMPIEVMAKRGIKTMLYGPMKPVGLEYPDDYTGPRDGEFKTPYAVVQLRQDNAAGSLYNIVGFQTHLKWGEQKRVFQMIPGLENAEFVRYGVMHRNSYMDSPNLLTETFQSRSNPNLFFAGQMTGVEGYVESAASGLVAGINAARLFKREEALIFPQTTAIGSLPHYVTHADSKHFQPMNVNFGIIKELEGPRIRDKKERYEAIASRALADLDTCLALL</sequence>
<reference key="1">
    <citation type="journal article" date="2007" name="J. Bacteriol.">
        <title>Complete genome of acute rheumatic fever-associated serotype M5 Streptococcus pyogenes strain Manfredo.</title>
        <authorList>
            <person name="Holden M.T.G."/>
            <person name="Scott A."/>
            <person name="Cherevach I."/>
            <person name="Chillingworth T."/>
            <person name="Churcher C."/>
            <person name="Cronin A."/>
            <person name="Dowd L."/>
            <person name="Feltwell T."/>
            <person name="Hamlin N."/>
            <person name="Holroyd S."/>
            <person name="Jagels K."/>
            <person name="Moule S."/>
            <person name="Mungall K."/>
            <person name="Quail M.A."/>
            <person name="Price C."/>
            <person name="Rabbinowitsch E."/>
            <person name="Sharp S."/>
            <person name="Skelton J."/>
            <person name="Whitehead S."/>
            <person name="Barrell B.G."/>
            <person name="Kehoe M."/>
            <person name="Parkhill J."/>
        </authorList>
    </citation>
    <scope>NUCLEOTIDE SEQUENCE [LARGE SCALE GENOMIC DNA]</scope>
    <source>
        <strain>Manfredo</strain>
    </source>
</reference>
<protein>
    <recommendedName>
        <fullName evidence="1">Methylenetetrahydrofolate--tRNA-(uracil-5-)-methyltransferase TrmFO</fullName>
        <ecNumber evidence="1">2.1.1.74</ecNumber>
    </recommendedName>
    <alternativeName>
        <fullName evidence="1">Folate-dependent tRNA (uracil-5-)-methyltransferase</fullName>
    </alternativeName>
    <alternativeName>
        <fullName evidence="1">Folate-dependent tRNA(M-5-U54)-methyltransferase</fullName>
    </alternativeName>
</protein>
<feature type="chain" id="PRO_1000063936" description="Methylenetetrahydrofolate--tRNA-(uracil-5-)-methyltransferase TrmFO">
    <location>
        <begin position="1"/>
        <end position="448"/>
    </location>
</feature>
<feature type="binding site" evidence="1">
    <location>
        <begin position="13"/>
        <end position="18"/>
    </location>
    <ligand>
        <name>FAD</name>
        <dbReference type="ChEBI" id="CHEBI:57692"/>
    </ligand>
</feature>
<proteinExistence type="inferred from homology"/>
<organism>
    <name type="scientific">Streptococcus pyogenes serotype M5 (strain Manfredo)</name>
    <dbReference type="NCBI Taxonomy" id="160491"/>
    <lineage>
        <taxon>Bacteria</taxon>
        <taxon>Bacillati</taxon>
        <taxon>Bacillota</taxon>
        <taxon>Bacilli</taxon>
        <taxon>Lactobacillales</taxon>
        <taxon>Streptococcaceae</taxon>
        <taxon>Streptococcus</taxon>
    </lineage>
</organism>
<keyword id="KW-0963">Cytoplasm</keyword>
<keyword id="KW-0274">FAD</keyword>
<keyword id="KW-0285">Flavoprotein</keyword>
<keyword id="KW-0489">Methyltransferase</keyword>
<keyword id="KW-0520">NAD</keyword>
<keyword id="KW-0521">NADP</keyword>
<keyword id="KW-0808">Transferase</keyword>
<keyword id="KW-0819">tRNA processing</keyword>